<organism>
    <name type="scientific">Rat coronavirus (strain 681)</name>
    <name type="common">RCV-SDAV</name>
    <name type="synonym">Sialodacryoadenitis virus SDAV-681</name>
    <dbReference type="NCBI Taxonomy" id="33740"/>
    <lineage>
        <taxon>Viruses</taxon>
        <taxon>Riboviria</taxon>
        <taxon>Orthornavirae</taxon>
        <taxon>Pisuviricota</taxon>
        <taxon>Pisoniviricetes</taxon>
        <taxon>Nidovirales</taxon>
        <taxon>Cornidovirineae</taxon>
        <taxon>Coronaviridae</taxon>
        <taxon>Orthocoronavirinae</taxon>
        <taxon>Betacoronavirus</taxon>
        <taxon>Embecovirus</taxon>
        <taxon>Murine coronavirus</taxon>
    </lineage>
</organism>
<sequence>MESSRRPLGLTKPSADKIMEIEAEGISPSRLQLLSPIPGVWFPITLGFRALPNSRREKSSSLQVDKECLLPMESHLLSKRDIGIDTTVVLLKHLMGSRSNYSPDGIFTILGRAPMLEPVSETALRESSGLQIVRRIPTPLLTLLKGTQVAMRLFLLGLRPVRYCLRVSMLKAREGLHLLVDLVRGHNPVGQIIALEAVPTSASLPLL</sequence>
<comment type="function">
    <text evidence="1">Structural protein that is not essential for the viral replication either in tissue culture or in its natural host.</text>
</comment>
<comment type="subcellular location">
    <subcellularLocation>
        <location evidence="1">Virion</location>
    </subcellularLocation>
</comment>
<comment type="miscellaneous">
    <text>The gene encoding this protein is included within the N gene (alternative ORF).</text>
</comment>
<comment type="similarity">
    <text evidence="2">Belongs to the coronavirus I protein family.</text>
</comment>
<reference key="1">
    <citation type="journal article" date="2000" name="Clin. Diagn. Lab. Immunol.">
        <title>Primary structure of the sialodacryoadenitis virus genome: sequence of the structural-protein region and its application for differential diagnosis.</title>
        <authorList>
            <person name="Yoo D."/>
            <person name="Pei Y."/>
            <person name="Christie N."/>
            <person name="Cooper M."/>
        </authorList>
    </citation>
    <scope>NUCLEOTIDE SEQUENCE [GENOMIC RNA]</scope>
</reference>
<keyword id="KW-0946">Virion</keyword>
<feature type="chain" id="PRO_0000284102" description="Protein I">
    <location>
        <begin position="1"/>
        <end position="207"/>
    </location>
</feature>
<name>IORF_CVRSD</name>
<proteinExistence type="inferred from homology"/>
<accession>Q9IKC5</accession>
<protein>
    <recommendedName>
        <fullName>Protein I</fullName>
    </recommendedName>
    <alternativeName>
        <fullName>Accessory protein N2</fullName>
    </alternativeName>
    <alternativeName>
        <fullName>N internal ORF protein</fullName>
        <shortName>IORF</shortName>
    </alternativeName>
    <alternativeName>
        <fullName>Protein in nucleocapsid ORF</fullName>
    </alternativeName>
</protein>
<organismHost>
    <name type="scientific">Rattus norvegicus</name>
    <name type="common">Rat</name>
    <dbReference type="NCBI Taxonomy" id="10116"/>
</organismHost>
<evidence type="ECO:0000250" key="1"/>
<evidence type="ECO:0000305" key="2"/>
<dbReference type="EMBL" id="AF207551">
    <property type="protein sequence ID" value="AAF97744.1"/>
    <property type="molecule type" value="Genomic_RNA"/>
</dbReference>
<dbReference type="GO" id="GO:0044423">
    <property type="term" value="C:virion component"/>
    <property type="evidence" value="ECO:0007669"/>
    <property type="project" value="UniProtKB-KW"/>
</dbReference>
<dbReference type="CDD" id="cd21662">
    <property type="entry name" value="embe-CoV_Protein-I_like"/>
    <property type="match status" value="1"/>
</dbReference>
<dbReference type="InterPro" id="IPR004876">
    <property type="entry name" value="Corona_nucI"/>
</dbReference>
<dbReference type="InterPro" id="IPR044311">
    <property type="entry name" value="N2-like_embe-CoV"/>
</dbReference>
<dbReference type="Pfam" id="PF03187">
    <property type="entry name" value="Corona_I"/>
    <property type="match status" value="1"/>
</dbReference>
<gene>
    <name type="primary">N</name>
    <name type="synonym">I</name>
</gene>